<dbReference type="EMBL" id="X89514">
    <property type="protein sequence ID" value="CAA61690.1"/>
    <property type="molecule type" value="Genomic_DNA"/>
</dbReference>
<dbReference type="EMBL" id="U53878">
    <property type="protein sequence ID" value="AAB67557.1"/>
    <property type="molecule type" value="Genomic_DNA"/>
</dbReference>
<dbReference type="EMBL" id="Z73284">
    <property type="protein sequence ID" value="CAA97679.1"/>
    <property type="molecule type" value="Genomic_DNA"/>
</dbReference>
<dbReference type="EMBL" id="BK006945">
    <property type="protein sequence ID" value="DAA80315.1"/>
    <property type="molecule type" value="Genomic_DNA"/>
</dbReference>
<dbReference type="PIR" id="S64949">
    <property type="entry name" value="S64949"/>
</dbReference>
<dbReference type="RefSeq" id="NP_001335795.1">
    <property type="nucleotide sequence ID" value="NM_001348855.1"/>
</dbReference>
<dbReference type="DIP" id="DIP-5613N"/>
<dbReference type="FunCoup" id="Q12130">
    <property type="interactions" value="52"/>
</dbReference>
<dbReference type="STRING" id="4932.YLR112W"/>
<dbReference type="PaxDb" id="4932-YLR112W"/>
<dbReference type="EnsemblFungi" id="YLR112W_mRNA">
    <property type="protein sequence ID" value="YLR112W"/>
    <property type="gene ID" value="YLR112W"/>
</dbReference>
<dbReference type="GeneID" id="850802"/>
<dbReference type="AGR" id="SGD:S000004102"/>
<dbReference type="SGD" id="S000004102">
    <property type="gene designation" value="YLR112W"/>
</dbReference>
<dbReference type="HOGENOM" id="CLU_1846696_0_0_1"/>
<dbReference type="InParanoid" id="Q12130"/>
<dbReference type="PRO" id="PR:Q12130"/>
<dbReference type="Proteomes" id="UP000002311">
    <property type="component" value="Chromosome XII"/>
</dbReference>
<dbReference type="RNAct" id="Q12130">
    <property type="molecule type" value="protein"/>
</dbReference>
<gene>
    <name type="ordered locus">YLR112W</name>
    <name type="ORF">L2928</name>
    <name type="ORF">L9354.3</name>
</gene>
<keyword id="KW-1185">Reference proteome</keyword>
<reference key="1">
    <citation type="journal article" date="1997" name="Yeast">
        <title>Sequence analysis of a 37.6 kbp cosmid clone from the right arm of Saccharomyces cerevisiae chromosome XII, carrying YAP3, HOG1, SNR6, tRNA-Arg3 and 23 new open reading frames, among which several homologies to proteins involved in cell division control and to mammalian growth factors and other animal proteins are found.</title>
        <authorList>
            <person name="Verhasselt P."/>
            <person name="Volckaert G."/>
        </authorList>
    </citation>
    <scope>NUCLEOTIDE SEQUENCE [GENOMIC DNA]</scope>
    <source>
        <strain>ATCC 90840 / EAY235 / FY23</strain>
    </source>
</reference>
<reference key="2">
    <citation type="journal article" date="1997" name="Nature">
        <title>The nucleotide sequence of Saccharomyces cerevisiae chromosome XII.</title>
        <authorList>
            <person name="Johnston M."/>
            <person name="Hillier L.W."/>
            <person name="Riles L."/>
            <person name="Albermann K."/>
            <person name="Andre B."/>
            <person name="Ansorge W."/>
            <person name="Benes V."/>
            <person name="Brueckner M."/>
            <person name="Delius H."/>
            <person name="Dubois E."/>
            <person name="Duesterhoeft A."/>
            <person name="Entian K.-D."/>
            <person name="Floeth M."/>
            <person name="Goffeau A."/>
            <person name="Hebling U."/>
            <person name="Heumann K."/>
            <person name="Heuss-Neitzel D."/>
            <person name="Hilbert H."/>
            <person name="Hilger F."/>
            <person name="Kleine K."/>
            <person name="Koetter P."/>
            <person name="Louis E.J."/>
            <person name="Messenguy F."/>
            <person name="Mewes H.-W."/>
            <person name="Miosga T."/>
            <person name="Moestl D."/>
            <person name="Mueller-Auer S."/>
            <person name="Nentwich U."/>
            <person name="Obermaier B."/>
            <person name="Piravandi E."/>
            <person name="Pohl T.M."/>
            <person name="Portetelle D."/>
            <person name="Purnelle B."/>
            <person name="Rechmann S."/>
            <person name="Rieger M."/>
            <person name="Rinke M."/>
            <person name="Rose M."/>
            <person name="Scharfe M."/>
            <person name="Scherens B."/>
            <person name="Scholler P."/>
            <person name="Schwager C."/>
            <person name="Schwarz S."/>
            <person name="Underwood A.P."/>
            <person name="Urrestarazu L.A."/>
            <person name="Vandenbol M."/>
            <person name="Verhasselt P."/>
            <person name="Vierendeels F."/>
            <person name="Voet M."/>
            <person name="Volckaert G."/>
            <person name="Voss H."/>
            <person name="Wambutt R."/>
            <person name="Wedler E."/>
            <person name="Wedler H."/>
            <person name="Zimmermann F.K."/>
            <person name="Zollner A."/>
            <person name="Hani J."/>
            <person name="Hoheisel J.D."/>
        </authorList>
    </citation>
    <scope>NUCLEOTIDE SEQUENCE [LARGE SCALE GENOMIC DNA]</scope>
    <source>
        <strain>ATCC 204508 / S288c</strain>
    </source>
</reference>
<reference key="3">
    <citation type="journal article" date="2014" name="G3 (Bethesda)">
        <title>The reference genome sequence of Saccharomyces cerevisiae: Then and now.</title>
        <authorList>
            <person name="Engel S.R."/>
            <person name="Dietrich F.S."/>
            <person name="Fisk D.G."/>
            <person name="Binkley G."/>
            <person name="Balakrishnan R."/>
            <person name="Costanzo M.C."/>
            <person name="Dwight S.S."/>
            <person name="Hitz B.C."/>
            <person name="Karra K."/>
            <person name="Nash R.S."/>
            <person name="Weng S."/>
            <person name="Wong E.D."/>
            <person name="Lloyd P."/>
            <person name="Skrzypek M.S."/>
            <person name="Miyasato S.R."/>
            <person name="Simison M."/>
            <person name="Cherry J.M."/>
        </authorList>
    </citation>
    <scope>GENOME REANNOTATION</scope>
    <source>
        <strain>ATCC 204508 / S288c</strain>
    </source>
</reference>
<accession>Q12130</accession>
<accession>A0A1S0T095</accession>
<organism>
    <name type="scientific">Saccharomyces cerevisiae (strain ATCC 204508 / S288c)</name>
    <name type="common">Baker's yeast</name>
    <dbReference type="NCBI Taxonomy" id="559292"/>
    <lineage>
        <taxon>Eukaryota</taxon>
        <taxon>Fungi</taxon>
        <taxon>Dikarya</taxon>
        <taxon>Ascomycota</taxon>
        <taxon>Saccharomycotina</taxon>
        <taxon>Saccharomycetes</taxon>
        <taxon>Saccharomycetales</taxon>
        <taxon>Saccharomycetaceae</taxon>
        <taxon>Saccharomyces</taxon>
    </lineage>
</organism>
<name>YL112_YEAST</name>
<sequence>MGGRSAQPRRFSFACRILHPAVAHDAMAGSRYILRAPASIIRLAQHGWLHCCLHFFLFPAMNDVCFVAKGSALYLFTVEIIVFGSPSLRHNVLSFFYFALPWFKRQCRLKVNFNRLKEIRGIAQVVRKAFFISKTLPCI</sequence>
<protein>
    <recommendedName>
        <fullName>Uncharacterized protein YLR112W</fullName>
    </recommendedName>
</protein>
<feature type="chain" id="PRO_0000299612" description="Uncharacterized protein YLR112W">
    <location>
        <begin position="1"/>
        <end position="139"/>
    </location>
</feature>
<proteinExistence type="predicted"/>